<name>BCL2_ORYSI</name>
<keyword id="KW-0939">Gibberellin signaling pathway</keyword>
<keyword id="KW-0539">Nucleus</keyword>
<keyword id="KW-1185">Reference proteome</keyword>
<keyword id="KW-0804">Transcription</keyword>
<keyword id="KW-0805">Transcription regulation</keyword>
<dbReference type="EMBL" id="CM000127">
    <property type="protein sequence ID" value="EEC73857.1"/>
    <property type="molecule type" value="Genomic_DNA"/>
</dbReference>
<dbReference type="SMR" id="B8AH97"/>
<dbReference type="STRING" id="39946.B8AH97"/>
<dbReference type="EnsemblPlants" id="BGIOSGA005771-TA">
    <property type="protein sequence ID" value="BGIOSGA005771-PA"/>
    <property type="gene ID" value="BGIOSGA005771"/>
</dbReference>
<dbReference type="EnsemblPlants" id="OsIR64_02g0030100.01">
    <property type="protein sequence ID" value="OsIR64_02g0030100.01"/>
    <property type="gene ID" value="OsIR64_02g0030100"/>
</dbReference>
<dbReference type="EnsemblPlants" id="OsKYG_02g0030180.01">
    <property type="protein sequence ID" value="OsKYG_02g0030180.01"/>
    <property type="gene ID" value="OsKYG_02g0030180"/>
</dbReference>
<dbReference type="EnsemblPlants" id="OsLaMu_02g0030000.01">
    <property type="protein sequence ID" value="OsLaMu_02g0030000.01"/>
    <property type="gene ID" value="OsLaMu_02g0030000"/>
</dbReference>
<dbReference type="EnsemblPlants" id="OsLima_02g0030420.01">
    <property type="protein sequence ID" value="OsLima_02g0030420.01"/>
    <property type="gene ID" value="OsLima_02g0030420"/>
</dbReference>
<dbReference type="EnsemblPlants" id="OsLiXu_02g0030360.01">
    <property type="protein sequence ID" value="OsLiXu_02g0030360.01"/>
    <property type="gene ID" value="OsLiXu_02g0030360"/>
</dbReference>
<dbReference type="EnsemblPlants" id="OsMH63_02G030740_01">
    <property type="protein sequence ID" value="OsMH63_02G030740_01"/>
    <property type="gene ID" value="OsMH63_02G030740"/>
</dbReference>
<dbReference type="EnsemblPlants" id="OsPr106_02g0030330.01">
    <property type="protein sequence ID" value="OsPr106_02g0030330.01"/>
    <property type="gene ID" value="OsPr106_02g0030330"/>
</dbReference>
<dbReference type="EnsemblPlants" id="OsZS97_02G030070_01">
    <property type="protein sequence ID" value="OsZS97_02G030070_01"/>
    <property type="gene ID" value="OsZS97_02G030070"/>
</dbReference>
<dbReference type="Gramene" id="BGIOSGA005771-TA">
    <property type="protein sequence ID" value="BGIOSGA005771-PA"/>
    <property type="gene ID" value="BGIOSGA005771"/>
</dbReference>
<dbReference type="Gramene" id="OsIR64_02g0030100.01">
    <property type="protein sequence ID" value="OsIR64_02g0030100.01"/>
    <property type="gene ID" value="OsIR64_02g0030100"/>
</dbReference>
<dbReference type="Gramene" id="OsKYG_02g0030180.01">
    <property type="protein sequence ID" value="OsKYG_02g0030180.01"/>
    <property type="gene ID" value="OsKYG_02g0030180"/>
</dbReference>
<dbReference type="Gramene" id="OsLaMu_02g0030000.01">
    <property type="protein sequence ID" value="OsLaMu_02g0030000.01"/>
    <property type="gene ID" value="OsLaMu_02g0030000"/>
</dbReference>
<dbReference type="Gramene" id="OsLima_02g0030420.01">
    <property type="protein sequence ID" value="OsLima_02g0030420.01"/>
    <property type="gene ID" value="OsLima_02g0030420"/>
</dbReference>
<dbReference type="Gramene" id="OsLiXu_02g0030360.01">
    <property type="protein sequence ID" value="OsLiXu_02g0030360.01"/>
    <property type="gene ID" value="OsLiXu_02g0030360"/>
</dbReference>
<dbReference type="Gramene" id="OsMH63_02G030740_01">
    <property type="protein sequence ID" value="OsMH63_02G030740_01"/>
    <property type="gene ID" value="OsMH63_02G030740"/>
</dbReference>
<dbReference type="Gramene" id="OsPr106_02g0030330.01">
    <property type="protein sequence ID" value="OsPr106_02g0030330.01"/>
    <property type="gene ID" value="OsPr106_02g0030330"/>
</dbReference>
<dbReference type="Gramene" id="OsZS97_02G030070_01">
    <property type="protein sequence ID" value="OsZS97_02G030070_01"/>
    <property type="gene ID" value="OsZS97_02G030070"/>
</dbReference>
<dbReference type="HOGENOM" id="CLU_025018_2_0_1"/>
<dbReference type="OMA" id="KMEMSRS"/>
<dbReference type="OrthoDB" id="10511362at2759"/>
<dbReference type="Proteomes" id="UP000007015">
    <property type="component" value="Chromosome 2"/>
</dbReference>
<dbReference type="GO" id="GO:0005634">
    <property type="term" value="C:nucleus"/>
    <property type="evidence" value="ECO:0007669"/>
    <property type="project" value="UniProtKB-SubCell"/>
</dbReference>
<dbReference type="GO" id="GO:0003700">
    <property type="term" value="F:DNA-binding transcription factor activity"/>
    <property type="evidence" value="ECO:0007669"/>
    <property type="project" value="TreeGrafter"/>
</dbReference>
<dbReference type="GO" id="GO:0046983">
    <property type="term" value="F:protein dimerization activity"/>
    <property type="evidence" value="ECO:0007669"/>
    <property type="project" value="InterPro"/>
</dbReference>
<dbReference type="GO" id="GO:0009740">
    <property type="term" value="P:gibberellic acid mediated signaling pathway"/>
    <property type="evidence" value="ECO:0007669"/>
    <property type="project" value="UniProtKB-KW"/>
</dbReference>
<dbReference type="GO" id="GO:0010372">
    <property type="term" value="P:positive regulation of gibberellin biosynthetic process"/>
    <property type="evidence" value="ECO:0007669"/>
    <property type="project" value="EnsemblPlants"/>
</dbReference>
<dbReference type="GO" id="GO:0051510">
    <property type="term" value="P:regulation of unidimensional cell growth"/>
    <property type="evidence" value="ECO:0007669"/>
    <property type="project" value="EnsemblPlants"/>
</dbReference>
<dbReference type="CDD" id="cd18919">
    <property type="entry name" value="bHLH_AtBPE_like"/>
    <property type="match status" value="1"/>
</dbReference>
<dbReference type="FunFam" id="4.10.280.10:FF:000002">
    <property type="entry name" value="Basic helix-loop-helix transcription factor"/>
    <property type="match status" value="1"/>
</dbReference>
<dbReference type="Gene3D" id="4.10.280.10">
    <property type="entry name" value="Helix-loop-helix DNA-binding domain"/>
    <property type="match status" value="1"/>
</dbReference>
<dbReference type="InterPro" id="IPR011598">
    <property type="entry name" value="bHLH_dom"/>
</dbReference>
<dbReference type="InterPro" id="IPR024097">
    <property type="entry name" value="bHLH_ZIP_TF"/>
</dbReference>
<dbReference type="InterPro" id="IPR036638">
    <property type="entry name" value="HLH_DNA-bd_sf"/>
</dbReference>
<dbReference type="PANTHER" id="PTHR12565:SF319">
    <property type="entry name" value="BASIC HELIX-LOOP-HELIX PROTEIN 79"/>
    <property type="match status" value="1"/>
</dbReference>
<dbReference type="PANTHER" id="PTHR12565">
    <property type="entry name" value="STEROL REGULATORY ELEMENT-BINDING PROTEIN"/>
    <property type="match status" value="1"/>
</dbReference>
<dbReference type="Pfam" id="PF00010">
    <property type="entry name" value="HLH"/>
    <property type="match status" value="1"/>
</dbReference>
<dbReference type="SMART" id="SM00353">
    <property type="entry name" value="HLH"/>
    <property type="match status" value="1"/>
</dbReference>
<dbReference type="SUPFAM" id="SSF47459">
    <property type="entry name" value="HLH, helix-loop-helix DNA-binding domain"/>
    <property type="match status" value="1"/>
</dbReference>
<dbReference type="PROSITE" id="PS50888">
    <property type="entry name" value="BHLH"/>
    <property type="match status" value="1"/>
</dbReference>
<comment type="function">
    <text evidence="1">Together with BCL1, positive regulator of cell elongation at least partially through increased gibberellic acid (GA) biosynthesis.</text>
</comment>
<comment type="subunit">
    <text evidence="1 5">Homodimer (Probable). Interacts with IBH1 (By similarity).</text>
</comment>
<comment type="subcellular location">
    <subcellularLocation>
        <location evidence="2 3">Nucleus</location>
    </subcellularLocation>
</comment>
<comment type="similarity">
    <text evidence="5">Belongs to the bHLH protein family.</text>
</comment>
<organism>
    <name type="scientific">Oryza sativa subsp. indica</name>
    <name type="common">Rice</name>
    <dbReference type="NCBI Taxonomy" id="39946"/>
    <lineage>
        <taxon>Eukaryota</taxon>
        <taxon>Viridiplantae</taxon>
        <taxon>Streptophyta</taxon>
        <taxon>Embryophyta</taxon>
        <taxon>Tracheophyta</taxon>
        <taxon>Spermatophyta</taxon>
        <taxon>Magnoliopsida</taxon>
        <taxon>Liliopsida</taxon>
        <taxon>Poales</taxon>
        <taxon>Poaceae</taxon>
        <taxon>BOP clade</taxon>
        <taxon>Oryzoideae</taxon>
        <taxon>Oryzeae</taxon>
        <taxon>Oryzinae</taxon>
        <taxon>Oryza</taxon>
        <taxon>Oryza sativa</taxon>
    </lineage>
</organism>
<feature type="chain" id="PRO_0000456872" description="Basic helix-loop-helix protein 79">
    <location>
        <begin position="1"/>
        <end position="361"/>
    </location>
</feature>
<feature type="domain" description="bHLH" evidence="3">
    <location>
        <begin position="170"/>
        <end position="220"/>
    </location>
</feature>
<feature type="region of interest" description="Disordered" evidence="4">
    <location>
        <begin position="66"/>
        <end position="159"/>
    </location>
</feature>
<feature type="region of interest" description="Basic motif; degenerate" evidence="3">
    <location>
        <begin position="170"/>
        <end position="183"/>
    </location>
</feature>
<feature type="region of interest" description="Helix-loop-helix motif" evidence="3">
    <location>
        <begin position="184"/>
        <end position="220"/>
    </location>
</feature>
<feature type="short sequence motif" description="Nuclear localization signal" evidence="2">
    <location>
        <begin position="166"/>
        <end position="173"/>
    </location>
</feature>
<feature type="compositionally biased region" description="Basic and acidic residues" evidence="4">
    <location>
        <begin position="124"/>
        <end position="138"/>
    </location>
</feature>
<feature type="compositionally biased region" description="Polar residues" evidence="4">
    <location>
        <begin position="146"/>
        <end position="157"/>
    </location>
</feature>
<proteinExistence type="inferred from homology"/>
<gene>
    <name evidence="1" type="primary">BCL2</name>
    <name evidence="1" type="synonym">bHLH079</name>
    <name evidence="6" type="ORF">OsI_08622</name>
</gene>
<protein>
    <recommendedName>
        <fullName evidence="1">Basic helix-loop-helix protein 79</fullName>
        <shortName evidence="1">OsbHLH079</shortName>
    </recommendedName>
    <alternativeName>
        <fullName evidence="1">Protein BC-like 2</fullName>
        <shortName evidence="1">OsBC1-like2</shortName>
        <shortName evidence="1">OsBCL2</shortName>
    </alternativeName>
</protein>
<reference key="1">
    <citation type="journal article" date="2005" name="PLoS Biol.">
        <title>The genomes of Oryza sativa: a history of duplications.</title>
        <authorList>
            <person name="Yu J."/>
            <person name="Wang J."/>
            <person name="Lin W."/>
            <person name="Li S."/>
            <person name="Li H."/>
            <person name="Zhou J."/>
            <person name="Ni P."/>
            <person name="Dong W."/>
            <person name="Hu S."/>
            <person name="Zeng C."/>
            <person name="Zhang J."/>
            <person name="Zhang Y."/>
            <person name="Li R."/>
            <person name="Xu Z."/>
            <person name="Li S."/>
            <person name="Li X."/>
            <person name="Zheng H."/>
            <person name="Cong L."/>
            <person name="Lin L."/>
            <person name="Yin J."/>
            <person name="Geng J."/>
            <person name="Li G."/>
            <person name="Shi J."/>
            <person name="Liu J."/>
            <person name="Lv H."/>
            <person name="Li J."/>
            <person name="Wang J."/>
            <person name="Deng Y."/>
            <person name="Ran L."/>
            <person name="Shi X."/>
            <person name="Wang X."/>
            <person name="Wu Q."/>
            <person name="Li C."/>
            <person name="Ren X."/>
            <person name="Wang J."/>
            <person name="Wang X."/>
            <person name="Li D."/>
            <person name="Liu D."/>
            <person name="Zhang X."/>
            <person name="Ji Z."/>
            <person name="Zhao W."/>
            <person name="Sun Y."/>
            <person name="Zhang Z."/>
            <person name="Bao J."/>
            <person name="Han Y."/>
            <person name="Dong L."/>
            <person name="Ji J."/>
            <person name="Chen P."/>
            <person name="Wu S."/>
            <person name="Liu J."/>
            <person name="Xiao Y."/>
            <person name="Bu D."/>
            <person name="Tan J."/>
            <person name="Yang L."/>
            <person name="Ye C."/>
            <person name="Zhang J."/>
            <person name="Xu J."/>
            <person name="Zhou Y."/>
            <person name="Yu Y."/>
            <person name="Zhang B."/>
            <person name="Zhuang S."/>
            <person name="Wei H."/>
            <person name="Liu B."/>
            <person name="Lei M."/>
            <person name="Yu H."/>
            <person name="Li Y."/>
            <person name="Xu H."/>
            <person name="Wei S."/>
            <person name="He X."/>
            <person name="Fang L."/>
            <person name="Zhang Z."/>
            <person name="Zhang Y."/>
            <person name="Huang X."/>
            <person name="Su Z."/>
            <person name="Tong W."/>
            <person name="Li J."/>
            <person name="Tong Z."/>
            <person name="Li S."/>
            <person name="Ye J."/>
            <person name="Wang L."/>
            <person name="Fang L."/>
            <person name="Lei T."/>
            <person name="Chen C.-S."/>
            <person name="Chen H.-C."/>
            <person name="Xu Z."/>
            <person name="Li H."/>
            <person name="Huang H."/>
            <person name="Zhang F."/>
            <person name="Xu H."/>
            <person name="Li N."/>
            <person name="Zhao C."/>
            <person name="Li S."/>
            <person name="Dong L."/>
            <person name="Huang Y."/>
            <person name="Li L."/>
            <person name="Xi Y."/>
            <person name="Qi Q."/>
            <person name="Li W."/>
            <person name="Zhang B."/>
            <person name="Hu W."/>
            <person name="Zhang Y."/>
            <person name="Tian X."/>
            <person name="Jiao Y."/>
            <person name="Liang X."/>
            <person name="Jin J."/>
            <person name="Gao L."/>
            <person name="Zheng W."/>
            <person name="Hao B."/>
            <person name="Liu S.-M."/>
            <person name="Wang W."/>
            <person name="Yuan L."/>
            <person name="Cao M."/>
            <person name="McDermott J."/>
            <person name="Samudrala R."/>
            <person name="Wang J."/>
            <person name="Wong G.K.-S."/>
            <person name="Yang H."/>
        </authorList>
    </citation>
    <scope>NUCLEOTIDE SEQUENCE [LARGE SCALE GENOMIC DNA]</scope>
    <source>
        <strain>cv. 93-11</strain>
    </source>
</reference>
<accession>B8AH97</accession>
<sequence>MAQCGGGDVSRHRKGHLDTVESLCQGLLDDVMLDDDKCRAMFGYLQEWQDLASMCYGSLGGEPPLAPEASNGSGSTGGGGSFRKRRPDDAKGESNSICKRQRGKQQQQQQPCHPDQMAAAVGKGRPERARPGAKKKAEVASPKDSPATSASTVTAGQKTDYIHVRARRGQATDSHSLAERVRRERISERMRYLQELVPGCNKVTGKAGMLDEIINYVQSLQKQVEFLSMKIAASNPVVNFNIVEDLFGRQLSQAACNPAALPAMALPMAQVEPSCLQMSPLQQMQTSAGSSGYGLEMVVSNQYSPPGGPMSVPAGASVEPCLNVNGAAGWDIGSHGLFSGFDAPFQSVQSDCLLDNLKMEM</sequence>
<evidence type="ECO:0000250" key="1">
    <source>
        <dbReference type="UniProtKB" id="Q6Z2G7"/>
    </source>
</evidence>
<evidence type="ECO:0000255" key="2">
    <source>
        <dbReference type="PROSITE-ProRule" id="PRU00768"/>
    </source>
</evidence>
<evidence type="ECO:0000255" key="3">
    <source>
        <dbReference type="PROSITE-ProRule" id="PRU00981"/>
    </source>
</evidence>
<evidence type="ECO:0000256" key="4">
    <source>
        <dbReference type="SAM" id="MobiDB-lite"/>
    </source>
</evidence>
<evidence type="ECO:0000305" key="5"/>
<evidence type="ECO:0000312" key="6">
    <source>
        <dbReference type="EMBL" id="EEC73857.1"/>
    </source>
</evidence>